<dbReference type="EC" id="3.1.26.4" evidence="1"/>
<dbReference type="EMBL" id="AE005174">
    <property type="protein sequence ID" value="AAG54485.1"/>
    <property type="molecule type" value="Genomic_DNA"/>
</dbReference>
<dbReference type="EMBL" id="BA000007">
    <property type="protein sequence ID" value="BAB33608.1"/>
    <property type="molecule type" value="Genomic_DNA"/>
</dbReference>
<dbReference type="PIR" id="A85503">
    <property type="entry name" value="A85503"/>
</dbReference>
<dbReference type="PIR" id="A90652">
    <property type="entry name" value="A90652"/>
</dbReference>
<dbReference type="RefSeq" id="NP_308212.1">
    <property type="nucleotide sequence ID" value="NC_002695.1"/>
</dbReference>
<dbReference type="RefSeq" id="WP_000569419.1">
    <property type="nucleotide sequence ID" value="NZ_VOAI01000002.1"/>
</dbReference>
<dbReference type="SMR" id="Q8X8X6"/>
<dbReference type="STRING" id="155864.Z0195"/>
<dbReference type="GeneID" id="913902"/>
<dbReference type="KEGG" id="ece:Z0195"/>
<dbReference type="KEGG" id="ecs:ECs_0185"/>
<dbReference type="PATRIC" id="fig|386585.9.peg.288"/>
<dbReference type="eggNOG" id="COG0164">
    <property type="taxonomic scope" value="Bacteria"/>
</dbReference>
<dbReference type="HOGENOM" id="CLU_036532_3_2_6"/>
<dbReference type="OMA" id="YPTKLHL"/>
<dbReference type="Proteomes" id="UP000000558">
    <property type="component" value="Chromosome"/>
</dbReference>
<dbReference type="Proteomes" id="UP000002519">
    <property type="component" value="Chromosome"/>
</dbReference>
<dbReference type="GO" id="GO:0005737">
    <property type="term" value="C:cytoplasm"/>
    <property type="evidence" value="ECO:0007669"/>
    <property type="project" value="UniProtKB-SubCell"/>
</dbReference>
<dbReference type="GO" id="GO:0032299">
    <property type="term" value="C:ribonuclease H2 complex"/>
    <property type="evidence" value="ECO:0007669"/>
    <property type="project" value="TreeGrafter"/>
</dbReference>
<dbReference type="GO" id="GO:0030145">
    <property type="term" value="F:manganese ion binding"/>
    <property type="evidence" value="ECO:0007669"/>
    <property type="project" value="UniProtKB-UniRule"/>
</dbReference>
<dbReference type="GO" id="GO:0003723">
    <property type="term" value="F:RNA binding"/>
    <property type="evidence" value="ECO:0007669"/>
    <property type="project" value="InterPro"/>
</dbReference>
<dbReference type="GO" id="GO:0004523">
    <property type="term" value="F:RNA-DNA hybrid ribonuclease activity"/>
    <property type="evidence" value="ECO:0007669"/>
    <property type="project" value="UniProtKB-UniRule"/>
</dbReference>
<dbReference type="GO" id="GO:0043137">
    <property type="term" value="P:DNA replication, removal of RNA primer"/>
    <property type="evidence" value="ECO:0007669"/>
    <property type="project" value="TreeGrafter"/>
</dbReference>
<dbReference type="GO" id="GO:0006298">
    <property type="term" value="P:mismatch repair"/>
    <property type="evidence" value="ECO:0007669"/>
    <property type="project" value="TreeGrafter"/>
</dbReference>
<dbReference type="CDD" id="cd07182">
    <property type="entry name" value="RNase_HII_bacteria_HII_like"/>
    <property type="match status" value="1"/>
</dbReference>
<dbReference type="FunFam" id="3.30.420.10:FF:000006">
    <property type="entry name" value="Ribonuclease HII"/>
    <property type="match status" value="1"/>
</dbReference>
<dbReference type="Gene3D" id="3.30.420.10">
    <property type="entry name" value="Ribonuclease H-like superfamily/Ribonuclease H"/>
    <property type="match status" value="1"/>
</dbReference>
<dbReference type="HAMAP" id="MF_00052_B">
    <property type="entry name" value="RNase_HII_B"/>
    <property type="match status" value="1"/>
</dbReference>
<dbReference type="InterPro" id="IPR022898">
    <property type="entry name" value="RNase_HII"/>
</dbReference>
<dbReference type="InterPro" id="IPR001352">
    <property type="entry name" value="RNase_HII/HIII"/>
</dbReference>
<dbReference type="InterPro" id="IPR024567">
    <property type="entry name" value="RNase_HII/HIII_dom"/>
</dbReference>
<dbReference type="InterPro" id="IPR012337">
    <property type="entry name" value="RNaseH-like_sf"/>
</dbReference>
<dbReference type="InterPro" id="IPR036397">
    <property type="entry name" value="RNaseH_sf"/>
</dbReference>
<dbReference type="NCBIfam" id="NF000594">
    <property type="entry name" value="PRK00015.1-1"/>
    <property type="match status" value="1"/>
</dbReference>
<dbReference type="NCBIfam" id="NF000595">
    <property type="entry name" value="PRK00015.1-3"/>
    <property type="match status" value="1"/>
</dbReference>
<dbReference type="NCBIfam" id="NF000596">
    <property type="entry name" value="PRK00015.1-4"/>
    <property type="match status" value="1"/>
</dbReference>
<dbReference type="PANTHER" id="PTHR10954">
    <property type="entry name" value="RIBONUCLEASE H2 SUBUNIT A"/>
    <property type="match status" value="1"/>
</dbReference>
<dbReference type="PANTHER" id="PTHR10954:SF18">
    <property type="entry name" value="RIBONUCLEASE HII"/>
    <property type="match status" value="1"/>
</dbReference>
<dbReference type="Pfam" id="PF01351">
    <property type="entry name" value="RNase_HII"/>
    <property type="match status" value="1"/>
</dbReference>
<dbReference type="SUPFAM" id="SSF53098">
    <property type="entry name" value="Ribonuclease H-like"/>
    <property type="match status" value="1"/>
</dbReference>
<dbReference type="PROSITE" id="PS51975">
    <property type="entry name" value="RNASE_H_2"/>
    <property type="match status" value="1"/>
</dbReference>
<feature type="chain" id="PRO_0000111573" description="Ribonuclease HII">
    <location>
        <begin position="1"/>
        <end position="198"/>
    </location>
</feature>
<feature type="domain" description="RNase H type-2" evidence="2">
    <location>
        <begin position="10"/>
        <end position="198"/>
    </location>
</feature>
<feature type="binding site" evidence="1">
    <location>
        <position position="16"/>
    </location>
    <ligand>
        <name>a divalent metal cation</name>
        <dbReference type="ChEBI" id="CHEBI:60240"/>
    </ligand>
</feature>
<feature type="binding site" evidence="1">
    <location>
        <position position="17"/>
    </location>
    <ligand>
        <name>a divalent metal cation</name>
        <dbReference type="ChEBI" id="CHEBI:60240"/>
    </ligand>
</feature>
<feature type="binding site" evidence="1">
    <location>
        <position position="108"/>
    </location>
    <ligand>
        <name>a divalent metal cation</name>
        <dbReference type="ChEBI" id="CHEBI:60240"/>
    </ligand>
</feature>
<proteinExistence type="inferred from homology"/>
<reference key="1">
    <citation type="journal article" date="2001" name="Nature">
        <title>Genome sequence of enterohaemorrhagic Escherichia coli O157:H7.</title>
        <authorList>
            <person name="Perna N.T."/>
            <person name="Plunkett G. III"/>
            <person name="Burland V."/>
            <person name="Mau B."/>
            <person name="Glasner J.D."/>
            <person name="Rose D.J."/>
            <person name="Mayhew G.F."/>
            <person name="Evans P.S."/>
            <person name="Gregor J."/>
            <person name="Kirkpatrick H.A."/>
            <person name="Posfai G."/>
            <person name="Hackett J."/>
            <person name="Klink S."/>
            <person name="Boutin A."/>
            <person name="Shao Y."/>
            <person name="Miller L."/>
            <person name="Grotbeck E.J."/>
            <person name="Davis N.W."/>
            <person name="Lim A."/>
            <person name="Dimalanta E.T."/>
            <person name="Potamousis K."/>
            <person name="Apodaca J."/>
            <person name="Anantharaman T.S."/>
            <person name="Lin J."/>
            <person name="Yen G."/>
            <person name="Schwartz D.C."/>
            <person name="Welch R.A."/>
            <person name="Blattner F.R."/>
        </authorList>
    </citation>
    <scope>NUCLEOTIDE SEQUENCE [LARGE SCALE GENOMIC DNA]</scope>
    <source>
        <strain>O157:H7 / EDL933 / ATCC 700927 / EHEC</strain>
    </source>
</reference>
<reference key="2">
    <citation type="journal article" date="2001" name="DNA Res.">
        <title>Complete genome sequence of enterohemorrhagic Escherichia coli O157:H7 and genomic comparison with a laboratory strain K-12.</title>
        <authorList>
            <person name="Hayashi T."/>
            <person name="Makino K."/>
            <person name="Ohnishi M."/>
            <person name="Kurokawa K."/>
            <person name="Ishii K."/>
            <person name="Yokoyama K."/>
            <person name="Han C.-G."/>
            <person name="Ohtsubo E."/>
            <person name="Nakayama K."/>
            <person name="Murata T."/>
            <person name="Tanaka M."/>
            <person name="Tobe T."/>
            <person name="Iida T."/>
            <person name="Takami H."/>
            <person name="Honda T."/>
            <person name="Sasakawa C."/>
            <person name="Ogasawara N."/>
            <person name="Yasunaga T."/>
            <person name="Kuhara S."/>
            <person name="Shiba T."/>
            <person name="Hattori M."/>
            <person name="Shinagawa H."/>
        </authorList>
    </citation>
    <scope>NUCLEOTIDE SEQUENCE [LARGE SCALE GENOMIC DNA]</scope>
    <source>
        <strain>O157:H7 / Sakai / RIMD 0509952 / EHEC</strain>
    </source>
</reference>
<organism>
    <name type="scientific">Escherichia coli O157:H7</name>
    <dbReference type="NCBI Taxonomy" id="83334"/>
    <lineage>
        <taxon>Bacteria</taxon>
        <taxon>Pseudomonadati</taxon>
        <taxon>Pseudomonadota</taxon>
        <taxon>Gammaproteobacteria</taxon>
        <taxon>Enterobacterales</taxon>
        <taxon>Enterobacteriaceae</taxon>
        <taxon>Escherichia</taxon>
    </lineage>
</organism>
<evidence type="ECO:0000255" key="1">
    <source>
        <dbReference type="HAMAP-Rule" id="MF_00052"/>
    </source>
</evidence>
<evidence type="ECO:0000255" key="2">
    <source>
        <dbReference type="PROSITE-ProRule" id="PRU01319"/>
    </source>
</evidence>
<gene>
    <name evidence="1" type="primary">rnhB</name>
    <name type="ordered locus">Z0195</name>
    <name type="ordered locus">ECs0185</name>
</gene>
<sequence>MIEFVYPHTQLVAGVDEVGRGPLVGAVVTAAVILDPARPIAGLNDSKKLSEKRRLALCEEIKEKALSWSLGRAEPHEIDELNILHATMLAMQRAVAGLHIAPEYVLIDGNRCPKLPMPAMAVVKGDSRVPEISAASILAKVTRDAEMAALDIVFPQYGFAQHKGYPTAFHLEKLAEHGATEHHRRSFGPVKRALGLAS</sequence>
<name>RNH2_ECO57</name>
<comment type="function">
    <text evidence="1">Endonuclease that specifically degrades the RNA of RNA-DNA hybrids.</text>
</comment>
<comment type="catalytic activity">
    <reaction evidence="1">
        <text>Endonucleolytic cleavage to 5'-phosphomonoester.</text>
        <dbReference type="EC" id="3.1.26.4"/>
    </reaction>
</comment>
<comment type="cofactor">
    <cofactor evidence="1">
        <name>Mn(2+)</name>
        <dbReference type="ChEBI" id="CHEBI:29035"/>
    </cofactor>
    <cofactor evidence="1">
        <name>Mg(2+)</name>
        <dbReference type="ChEBI" id="CHEBI:18420"/>
    </cofactor>
    <text evidence="1">Manganese or magnesium. Binds 1 divalent metal ion per monomer in the absence of substrate. May bind a second metal ion after substrate binding.</text>
</comment>
<comment type="subcellular location">
    <subcellularLocation>
        <location evidence="1">Cytoplasm</location>
    </subcellularLocation>
</comment>
<comment type="similarity">
    <text evidence="1">Belongs to the RNase HII family.</text>
</comment>
<protein>
    <recommendedName>
        <fullName evidence="1">Ribonuclease HII</fullName>
        <shortName evidence="1">RNase HII</shortName>
        <ecNumber evidence="1">3.1.26.4</ecNumber>
    </recommendedName>
</protein>
<keyword id="KW-0963">Cytoplasm</keyword>
<keyword id="KW-0255">Endonuclease</keyword>
<keyword id="KW-0378">Hydrolase</keyword>
<keyword id="KW-0464">Manganese</keyword>
<keyword id="KW-0479">Metal-binding</keyword>
<keyword id="KW-0540">Nuclease</keyword>
<keyword id="KW-1185">Reference proteome</keyword>
<accession>Q8X8X6</accession>